<accession>Q92L89</accession>
<reference key="1">
    <citation type="journal article" date="2001" name="Proc. Natl. Acad. Sci. U.S.A.">
        <title>Analysis of the chromosome sequence of the legume symbiont Sinorhizobium meliloti strain 1021.</title>
        <authorList>
            <person name="Capela D."/>
            <person name="Barloy-Hubler F."/>
            <person name="Gouzy J."/>
            <person name="Bothe G."/>
            <person name="Ampe F."/>
            <person name="Batut J."/>
            <person name="Boistard P."/>
            <person name="Becker A."/>
            <person name="Boutry M."/>
            <person name="Cadieu E."/>
            <person name="Dreano S."/>
            <person name="Gloux S."/>
            <person name="Godrie T."/>
            <person name="Goffeau A."/>
            <person name="Kahn D."/>
            <person name="Kiss E."/>
            <person name="Lelaure V."/>
            <person name="Masuy D."/>
            <person name="Pohl T."/>
            <person name="Portetelle D."/>
            <person name="Puehler A."/>
            <person name="Purnelle B."/>
            <person name="Ramsperger U."/>
            <person name="Renard C."/>
            <person name="Thebault P."/>
            <person name="Vandenbol M."/>
            <person name="Weidner S."/>
            <person name="Galibert F."/>
        </authorList>
    </citation>
    <scope>NUCLEOTIDE SEQUENCE [LARGE SCALE GENOMIC DNA]</scope>
    <source>
        <strain>1021</strain>
    </source>
</reference>
<reference key="2">
    <citation type="journal article" date="2001" name="Science">
        <title>The composite genome of the legume symbiont Sinorhizobium meliloti.</title>
        <authorList>
            <person name="Galibert F."/>
            <person name="Finan T.M."/>
            <person name="Long S.R."/>
            <person name="Puehler A."/>
            <person name="Abola P."/>
            <person name="Ampe F."/>
            <person name="Barloy-Hubler F."/>
            <person name="Barnett M.J."/>
            <person name="Becker A."/>
            <person name="Boistard P."/>
            <person name="Bothe G."/>
            <person name="Boutry M."/>
            <person name="Bowser L."/>
            <person name="Buhrmester J."/>
            <person name="Cadieu E."/>
            <person name="Capela D."/>
            <person name="Chain P."/>
            <person name="Cowie A."/>
            <person name="Davis R.W."/>
            <person name="Dreano S."/>
            <person name="Federspiel N.A."/>
            <person name="Fisher R.F."/>
            <person name="Gloux S."/>
            <person name="Godrie T."/>
            <person name="Goffeau A."/>
            <person name="Golding B."/>
            <person name="Gouzy J."/>
            <person name="Gurjal M."/>
            <person name="Hernandez-Lucas I."/>
            <person name="Hong A."/>
            <person name="Huizar L."/>
            <person name="Hyman R.W."/>
            <person name="Jones T."/>
            <person name="Kahn D."/>
            <person name="Kahn M.L."/>
            <person name="Kalman S."/>
            <person name="Keating D.H."/>
            <person name="Kiss E."/>
            <person name="Komp C."/>
            <person name="Lelaure V."/>
            <person name="Masuy D."/>
            <person name="Palm C."/>
            <person name="Peck M.C."/>
            <person name="Pohl T.M."/>
            <person name="Portetelle D."/>
            <person name="Purnelle B."/>
            <person name="Ramsperger U."/>
            <person name="Surzycki R."/>
            <person name="Thebault P."/>
            <person name="Vandenbol M."/>
            <person name="Vorhoelter F.J."/>
            <person name="Weidner S."/>
            <person name="Wells D.H."/>
            <person name="Wong K."/>
            <person name="Yeh K.-C."/>
            <person name="Batut J."/>
        </authorList>
    </citation>
    <scope>NUCLEOTIDE SEQUENCE [LARGE SCALE GENOMIC DNA]</scope>
    <source>
        <strain>1021</strain>
    </source>
</reference>
<protein>
    <recommendedName>
        <fullName>DNA translocase FtsK</fullName>
    </recommendedName>
</protein>
<sequence length="881" mass="95549">MSRSNTATLDSRSNRFVLTHFVWRQIASLAGFVLVGALALAIAALSTWNVADPSFSYATSNEPTNLLGYGGAVFADIFMQFFGLASVVALLPAVAWALVLIRGTHFDKVLKRLGLWFAGSVLASAALSCVPAPITWPLPNGLGGVFGDMILRFPALFTGTFPTGTFATVLACLFTAPAAWCLVYSAGLIGVSEDEEAEPAPEPAPSKARTIRDELEEEDEEGPLTVLMGSLAHMRYTAQARLRRAFGMGAKPAKRQYDEPYDFNNDEFGTLNEPVRPKAQAGRIEPSLDRSERRIVTPPPIMGDEDDPPFDIDERRPAGILPDDDEDDVAADWAPRPAPPKPALAMAGSRVAPPRPKAGQRVEREAQRSFVDEDGDFTLPPIHFLAEPKNVARDASLSADALEQNARMLEGVLEDFGVKGEIIHVRPGPVVTLYELEPAPGIKSSRVIGLADDIARSMSAIAARVAVVPGRNAIGIELPNQRREMVYLRELIGSRDFETTKTKLAMALGKTIGGESVVADLAKMPHLLVAGTTGSGKSVAINTMILSLLYRLRPDQCRLIMIDPKMLELSVYDGIPHLLSPVVTDPKKAVVALKWTVREMEERYKKMSKIGVRNIDGFNSRVEQALAKGEAITRTVQTGFDRQTGEAVYETEEFDLSPMPYIVVIIDEMADLMMVAGKDIEGAVQRLAQMARAAGIHVIMATQRPSVDVITGTIKANFPTRISFQVTSKIDSRTILGEQGAEQLLGMGDMLYMAGGGRIQRVHGPFVSDTEVEEVVAYLKTQGVPQYLDAITEDDEDENDGGGPAGTSNLADSEDPYDQAVAIVLRDGKASTSYVQRRLGIGYNRAASLIERMEQEGIISPANHAGKREILVPTEAEITGR</sequence>
<feature type="chain" id="PRO_0000098285" description="DNA translocase FtsK">
    <location>
        <begin position="1"/>
        <end position="881"/>
    </location>
</feature>
<feature type="transmembrane region" description="Helical" evidence="2">
    <location>
        <begin position="26"/>
        <end position="46"/>
    </location>
</feature>
<feature type="transmembrane region" description="Helical" evidence="2">
    <location>
        <begin position="81"/>
        <end position="101"/>
    </location>
</feature>
<feature type="transmembrane region" description="Helical" evidence="2">
    <location>
        <begin position="114"/>
        <end position="134"/>
    </location>
</feature>
<feature type="transmembrane region" description="Helical" evidence="2">
    <location>
        <begin position="169"/>
        <end position="189"/>
    </location>
</feature>
<feature type="topological domain" description="Cytoplasmic" evidence="2">
    <location>
        <begin position="190"/>
        <end position="881"/>
    </location>
</feature>
<feature type="domain" description="FtsK" evidence="3">
    <location>
        <begin position="514"/>
        <end position="733"/>
    </location>
</feature>
<feature type="region of interest" description="Disordered" evidence="4">
    <location>
        <begin position="194"/>
        <end position="221"/>
    </location>
</feature>
<feature type="region of interest" description="Disordered" evidence="4">
    <location>
        <begin position="339"/>
        <end position="362"/>
    </location>
</feature>
<feature type="region of interest" description="Disordered" evidence="4">
    <location>
        <begin position="793"/>
        <end position="813"/>
    </location>
</feature>
<feature type="binding site" evidence="3">
    <location>
        <begin position="534"/>
        <end position="539"/>
    </location>
    <ligand>
        <name>ATP</name>
        <dbReference type="ChEBI" id="CHEBI:30616"/>
    </ligand>
</feature>
<organism>
    <name type="scientific">Rhizobium meliloti (strain 1021)</name>
    <name type="common">Ensifer meliloti</name>
    <name type="synonym">Sinorhizobium meliloti</name>
    <dbReference type="NCBI Taxonomy" id="266834"/>
    <lineage>
        <taxon>Bacteria</taxon>
        <taxon>Pseudomonadati</taxon>
        <taxon>Pseudomonadota</taxon>
        <taxon>Alphaproteobacteria</taxon>
        <taxon>Hyphomicrobiales</taxon>
        <taxon>Rhizobiaceae</taxon>
        <taxon>Sinorhizobium/Ensifer group</taxon>
        <taxon>Sinorhizobium</taxon>
    </lineage>
</organism>
<evidence type="ECO:0000250" key="1"/>
<evidence type="ECO:0000255" key="2"/>
<evidence type="ECO:0000255" key="3">
    <source>
        <dbReference type="PROSITE-ProRule" id="PRU00289"/>
    </source>
</evidence>
<evidence type="ECO:0000256" key="4">
    <source>
        <dbReference type="SAM" id="MobiDB-lite"/>
    </source>
</evidence>
<evidence type="ECO:0000305" key="5"/>
<keyword id="KW-0067">ATP-binding</keyword>
<keyword id="KW-0131">Cell cycle</keyword>
<keyword id="KW-0132">Cell division</keyword>
<keyword id="KW-0997">Cell inner membrane</keyword>
<keyword id="KW-1003">Cell membrane</keyword>
<keyword id="KW-0159">Chromosome partition</keyword>
<keyword id="KW-0238">DNA-binding</keyword>
<keyword id="KW-0472">Membrane</keyword>
<keyword id="KW-0547">Nucleotide-binding</keyword>
<keyword id="KW-1185">Reference proteome</keyword>
<keyword id="KW-0812">Transmembrane</keyword>
<keyword id="KW-1133">Transmembrane helix</keyword>
<proteinExistence type="inferred from homology"/>
<comment type="function">
    <text evidence="1">Essential cell division protein that coordinates cell division and chromosome segregation. The N-terminus is involved in assembly of the cell-division machinery. The C-terminus functions as a DNA motor that moves dsDNA in an ATP-dependent manner towards the dif recombination site, which is located within the replication terminus region. Translocation stops specifically at Xer-dif sites, where FtsK interacts with the Xer recombinase, allowing activation of chromosome unlinking by recombination. FtsK orienting polar sequences (KOPS) guide the direction of DNA translocation. FtsK can remove proteins from DNA as it translocates, but translocation stops specifically at XerCD-dif site, thereby preventing removal of XerC and XerD from dif (By similarity).</text>
</comment>
<comment type="subunit">
    <text evidence="1">Homohexamer. Forms a ring that surrounds DNA (By similarity).</text>
</comment>
<comment type="subcellular location">
    <subcellularLocation>
        <location evidence="1">Cell inner membrane</location>
        <topology evidence="1">Multi-pass membrane protein</topology>
    </subcellularLocation>
    <text evidence="1">Located at the septum.</text>
</comment>
<comment type="domain">
    <text evidence="1">Consists of an N-terminal domain, which is sufficient for the localization to the septal ring and is required for cell division, followed by a linker domain, and a C-terminal domain, which forms the translocation motor involved in chromosome segregation. The C-terminal domain can be further subdivided into alpha, beta and gamma subdomains. The alpha and beta subdomains multimerise to produce a hexameric ring, contain the nucleotide binding motif and form the DNA pump. The gamma subdomain is a regulatory subdomain that controls translocation of DNA by recognition of KOPS motifs and interacts with XerD recombinase (By similarity).</text>
</comment>
<comment type="similarity">
    <text evidence="5">Belongs to the FtsK/SpoIIIE/SftA family.</text>
</comment>
<dbReference type="EMBL" id="AL591688">
    <property type="protein sequence ID" value="CAC47770.1"/>
    <property type="molecule type" value="Genomic_DNA"/>
</dbReference>
<dbReference type="RefSeq" id="NP_387297.1">
    <property type="nucleotide sequence ID" value="NC_003047.1"/>
</dbReference>
<dbReference type="RefSeq" id="WP_010970484.1">
    <property type="nucleotide sequence ID" value="NC_003047.1"/>
</dbReference>
<dbReference type="SMR" id="Q92L89"/>
<dbReference type="EnsemblBacteria" id="CAC47770">
    <property type="protein sequence ID" value="CAC47770"/>
    <property type="gene ID" value="SMc03808"/>
</dbReference>
<dbReference type="KEGG" id="sme:SMc03808"/>
<dbReference type="PATRIC" id="fig|266834.11.peg.4741"/>
<dbReference type="eggNOG" id="COG1674">
    <property type="taxonomic scope" value="Bacteria"/>
</dbReference>
<dbReference type="HOGENOM" id="CLU_001981_9_7_5"/>
<dbReference type="OrthoDB" id="9807790at2"/>
<dbReference type="Proteomes" id="UP000001976">
    <property type="component" value="Chromosome"/>
</dbReference>
<dbReference type="GO" id="GO:0005886">
    <property type="term" value="C:plasma membrane"/>
    <property type="evidence" value="ECO:0007669"/>
    <property type="project" value="UniProtKB-SubCell"/>
</dbReference>
<dbReference type="GO" id="GO:0005524">
    <property type="term" value="F:ATP binding"/>
    <property type="evidence" value="ECO:0007669"/>
    <property type="project" value="UniProtKB-KW"/>
</dbReference>
<dbReference type="GO" id="GO:0016887">
    <property type="term" value="F:ATP hydrolysis activity"/>
    <property type="evidence" value="ECO:0007669"/>
    <property type="project" value="InterPro"/>
</dbReference>
<dbReference type="GO" id="GO:0003677">
    <property type="term" value="F:DNA binding"/>
    <property type="evidence" value="ECO:0007669"/>
    <property type="project" value="UniProtKB-KW"/>
</dbReference>
<dbReference type="GO" id="GO:0051301">
    <property type="term" value="P:cell division"/>
    <property type="evidence" value="ECO:0007669"/>
    <property type="project" value="UniProtKB-KW"/>
</dbReference>
<dbReference type="GO" id="GO:0007059">
    <property type="term" value="P:chromosome segregation"/>
    <property type="evidence" value="ECO:0007669"/>
    <property type="project" value="UniProtKB-KW"/>
</dbReference>
<dbReference type="CDD" id="cd01127">
    <property type="entry name" value="TrwB_TraG_TraD_VirD4"/>
    <property type="match status" value="1"/>
</dbReference>
<dbReference type="Gene3D" id="3.30.980.40">
    <property type="match status" value="1"/>
</dbReference>
<dbReference type="Gene3D" id="3.40.50.300">
    <property type="entry name" value="P-loop containing nucleotide triphosphate hydrolases"/>
    <property type="match status" value="1"/>
</dbReference>
<dbReference type="Gene3D" id="1.10.10.10">
    <property type="entry name" value="Winged helix-like DNA-binding domain superfamily/Winged helix DNA-binding domain"/>
    <property type="match status" value="1"/>
</dbReference>
<dbReference type="InterPro" id="IPR003593">
    <property type="entry name" value="AAA+_ATPase"/>
</dbReference>
<dbReference type="InterPro" id="IPR050206">
    <property type="entry name" value="FtsK/SpoIIIE/SftA"/>
</dbReference>
<dbReference type="InterPro" id="IPR025199">
    <property type="entry name" value="FtsK_4TM"/>
</dbReference>
<dbReference type="InterPro" id="IPR041027">
    <property type="entry name" value="FtsK_alpha"/>
</dbReference>
<dbReference type="InterPro" id="IPR002543">
    <property type="entry name" value="FtsK_dom"/>
</dbReference>
<dbReference type="InterPro" id="IPR018541">
    <property type="entry name" value="Ftsk_gamma"/>
</dbReference>
<dbReference type="InterPro" id="IPR027417">
    <property type="entry name" value="P-loop_NTPase"/>
</dbReference>
<dbReference type="InterPro" id="IPR036388">
    <property type="entry name" value="WH-like_DNA-bd_sf"/>
</dbReference>
<dbReference type="InterPro" id="IPR036390">
    <property type="entry name" value="WH_DNA-bd_sf"/>
</dbReference>
<dbReference type="PANTHER" id="PTHR22683:SF41">
    <property type="entry name" value="DNA TRANSLOCASE FTSK"/>
    <property type="match status" value="1"/>
</dbReference>
<dbReference type="PANTHER" id="PTHR22683">
    <property type="entry name" value="SPORULATION PROTEIN RELATED"/>
    <property type="match status" value="1"/>
</dbReference>
<dbReference type="Pfam" id="PF13491">
    <property type="entry name" value="FtsK_4TM"/>
    <property type="match status" value="1"/>
</dbReference>
<dbReference type="Pfam" id="PF17854">
    <property type="entry name" value="FtsK_alpha"/>
    <property type="match status" value="1"/>
</dbReference>
<dbReference type="Pfam" id="PF09397">
    <property type="entry name" value="FtsK_gamma"/>
    <property type="match status" value="1"/>
</dbReference>
<dbReference type="Pfam" id="PF01580">
    <property type="entry name" value="FtsK_SpoIIIE"/>
    <property type="match status" value="1"/>
</dbReference>
<dbReference type="SMART" id="SM00382">
    <property type="entry name" value="AAA"/>
    <property type="match status" value="1"/>
</dbReference>
<dbReference type="SMART" id="SM00843">
    <property type="entry name" value="Ftsk_gamma"/>
    <property type="match status" value="1"/>
</dbReference>
<dbReference type="SUPFAM" id="SSF52540">
    <property type="entry name" value="P-loop containing nucleoside triphosphate hydrolases"/>
    <property type="match status" value="1"/>
</dbReference>
<dbReference type="SUPFAM" id="SSF46785">
    <property type="entry name" value="Winged helix' DNA-binding domain"/>
    <property type="match status" value="1"/>
</dbReference>
<dbReference type="PROSITE" id="PS50901">
    <property type="entry name" value="FTSK"/>
    <property type="match status" value="1"/>
</dbReference>
<gene>
    <name type="primary">ftsK</name>
    <name type="ordered locus">R03191</name>
    <name type="ORF">SMc03808</name>
</gene>
<name>FTSK_RHIME</name>